<evidence type="ECO:0000255" key="1">
    <source>
        <dbReference type="HAMAP-Rule" id="MF_01848"/>
    </source>
</evidence>
<reference key="1">
    <citation type="journal article" date="2008" name="J. Bacteriol.">
        <title>Insights into the environmental resistance gene pool from the genome sequence of the multidrug-resistant environmental isolate Escherichia coli SMS-3-5.</title>
        <authorList>
            <person name="Fricke W.F."/>
            <person name="Wright M.S."/>
            <person name="Lindell A.H."/>
            <person name="Harkins D.M."/>
            <person name="Baker-Austin C."/>
            <person name="Ravel J."/>
            <person name="Stepanauskas R."/>
        </authorList>
    </citation>
    <scope>NUCLEOTIDE SEQUENCE [LARGE SCALE GENOMIC DNA]</scope>
    <source>
        <strain>SMS-3-5 / SECEC</strain>
    </source>
</reference>
<comment type="function">
    <text evidence="1">Specifically methylates the adenine in position 1618 of 23S rRNA.</text>
</comment>
<comment type="catalytic activity">
    <reaction evidence="1">
        <text>adenosine(1618) in 23S rRNA + S-adenosyl-L-methionine = N(6)-methyladenosine(1618) in 23S rRNA + S-adenosyl-L-homocysteine + H(+)</text>
        <dbReference type="Rhea" id="RHEA:16497"/>
        <dbReference type="Rhea" id="RHEA-COMP:10229"/>
        <dbReference type="Rhea" id="RHEA-COMP:10231"/>
        <dbReference type="ChEBI" id="CHEBI:15378"/>
        <dbReference type="ChEBI" id="CHEBI:57856"/>
        <dbReference type="ChEBI" id="CHEBI:59789"/>
        <dbReference type="ChEBI" id="CHEBI:74411"/>
        <dbReference type="ChEBI" id="CHEBI:74449"/>
        <dbReference type="EC" id="2.1.1.181"/>
    </reaction>
</comment>
<comment type="subcellular location">
    <subcellularLocation>
        <location evidence="1">Cytoplasm</location>
    </subcellularLocation>
</comment>
<comment type="similarity">
    <text evidence="1">Belongs to the methyltransferase superfamily. METTL16/RlmF family.</text>
</comment>
<feature type="chain" id="PRO_0000349908" description="Ribosomal RNA large subunit methyltransferase F">
    <location>
        <begin position="1"/>
        <end position="308"/>
    </location>
</feature>
<dbReference type="EC" id="2.1.1.181" evidence="1"/>
<dbReference type="EMBL" id="CP000970">
    <property type="protein sequence ID" value="ACB19635.1"/>
    <property type="molecule type" value="Genomic_DNA"/>
</dbReference>
<dbReference type="RefSeq" id="WP_012311948.1">
    <property type="nucleotide sequence ID" value="NC_010498.1"/>
</dbReference>
<dbReference type="SMR" id="B1LM99"/>
<dbReference type="KEGG" id="ecm:EcSMS35_0832"/>
<dbReference type="HOGENOM" id="CLU_027534_3_0_6"/>
<dbReference type="Proteomes" id="UP000007011">
    <property type="component" value="Chromosome"/>
</dbReference>
<dbReference type="GO" id="GO:0005737">
    <property type="term" value="C:cytoplasm"/>
    <property type="evidence" value="ECO:0007669"/>
    <property type="project" value="UniProtKB-SubCell"/>
</dbReference>
<dbReference type="GO" id="GO:0052907">
    <property type="term" value="F:23S rRNA (adenine(1618)-N(6))-methyltransferase activity"/>
    <property type="evidence" value="ECO:0007669"/>
    <property type="project" value="UniProtKB-EC"/>
</dbReference>
<dbReference type="GO" id="GO:0070475">
    <property type="term" value="P:rRNA base methylation"/>
    <property type="evidence" value="ECO:0007669"/>
    <property type="project" value="TreeGrafter"/>
</dbReference>
<dbReference type="FunFam" id="3.40.50.150:FF:000045">
    <property type="entry name" value="Ribosomal RNA large subunit methyltransferase F"/>
    <property type="match status" value="1"/>
</dbReference>
<dbReference type="Gene3D" id="3.40.50.150">
    <property type="entry name" value="Vaccinia Virus protein VP39"/>
    <property type="match status" value="1"/>
</dbReference>
<dbReference type="HAMAP" id="MF_01848">
    <property type="entry name" value="23SrRNA_methyltr_F"/>
    <property type="match status" value="1"/>
</dbReference>
<dbReference type="InterPro" id="IPR010286">
    <property type="entry name" value="METTL16/RlmF"/>
</dbReference>
<dbReference type="InterPro" id="IPR016909">
    <property type="entry name" value="rRNA_lsu_MeTfrase_F"/>
</dbReference>
<dbReference type="InterPro" id="IPR029063">
    <property type="entry name" value="SAM-dependent_MTases_sf"/>
</dbReference>
<dbReference type="NCBIfam" id="NF008725">
    <property type="entry name" value="PRK11727.1"/>
    <property type="match status" value="1"/>
</dbReference>
<dbReference type="PANTHER" id="PTHR13393:SF0">
    <property type="entry name" value="RNA N6-ADENOSINE-METHYLTRANSFERASE METTL16"/>
    <property type="match status" value="1"/>
</dbReference>
<dbReference type="PANTHER" id="PTHR13393">
    <property type="entry name" value="SAM-DEPENDENT METHYLTRANSFERASE"/>
    <property type="match status" value="1"/>
</dbReference>
<dbReference type="Pfam" id="PF05971">
    <property type="entry name" value="Methyltransf_10"/>
    <property type="match status" value="1"/>
</dbReference>
<dbReference type="PIRSF" id="PIRSF029038">
    <property type="entry name" value="Mtase_YbiN_prd"/>
    <property type="match status" value="1"/>
</dbReference>
<dbReference type="SUPFAM" id="SSF53335">
    <property type="entry name" value="S-adenosyl-L-methionine-dependent methyltransferases"/>
    <property type="match status" value="1"/>
</dbReference>
<organism>
    <name type="scientific">Escherichia coli (strain SMS-3-5 / SECEC)</name>
    <dbReference type="NCBI Taxonomy" id="439855"/>
    <lineage>
        <taxon>Bacteria</taxon>
        <taxon>Pseudomonadati</taxon>
        <taxon>Pseudomonadota</taxon>
        <taxon>Gammaproteobacteria</taxon>
        <taxon>Enterobacterales</taxon>
        <taxon>Enterobacteriaceae</taxon>
        <taxon>Escherichia</taxon>
    </lineage>
</organism>
<keyword id="KW-0963">Cytoplasm</keyword>
<keyword id="KW-0489">Methyltransferase</keyword>
<keyword id="KW-0698">rRNA processing</keyword>
<keyword id="KW-0949">S-adenosyl-L-methionine</keyword>
<keyword id="KW-0808">Transferase</keyword>
<name>RLMF_ECOSM</name>
<proteinExistence type="inferred from homology"/>
<protein>
    <recommendedName>
        <fullName evidence="1">Ribosomal RNA large subunit methyltransferase F</fullName>
        <ecNumber evidence="1">2.1.1.181</ecNumber>
    </recommendedName>
    <alternativeName>
        <fullName evidence="1">23S rRNA mA1618 methyltransferase</fullName>
    </alternativeName>
    <alternativeName>
        <fullName evidence="1">rRNA adenine N-6-methyltransferase</fullName>
    </alternativeName>
</protein>
<gene>
    <name evidence="1" type="primary">rlmF</name>
    <name type="ordered locus">EcSMS35_0832</name>
</gene>
<sequence>MSAQKPGLHPRNRHHSRYDLATLCQVNPELRQFLTLTPAGEQSVDFANPLAVKALNKALLAHFYAVANWDIPDGFLCPPVPGRADYIHHLADLLAEATGSILANASILDIGVGANCIYPLIGVHEYGWRFTGSETSSQALSSAQAIISANPGLNRAIRLRRQKESGAIFNGIIHKNEQYDATLCNPPFHDSAAAARAGSERKRRNLGLNKDDALNFGGQQQELWCEGGEVAFIKKMIEESKGFAKQVMWFTSLVSRGENLPPLYRVLTEVGAVKVVKKEMAQGQKQSRFIAWTFMNDEQRRRFVNRQR</sequence>
<accession>B1LM99</accession>